<feature type="chain" id="PRO_0000171445" description="Probable protease SohB">
    <location>
        <begin position="1"/>
        <end position="342"/>
    </location>
</feature>
<feature type="transmembrane region" description="Helical" evidence="2">
    <location>
        <begin position="10"/>
        <end position="32"/>
    </location>
</feature>
<feature type="active site" description="Nucleophile" evidence="1">
    <location>
        <position position="172"/>
    </location>
</feature>
<feature type="active site" description="Proton donor/acceptor" evidence="1">
    <location>
        <position position="224"/>
    </location>
</feature>
<comment type="function">
    <text evidence="1">Possible protease.</text>
</comment>
<comment type="subcellular location">
    <subcellularLocation>
        <location evidence="3">Cell membrane</location>
        <topology evidence="3">Single-pass membrane protein</topology>
    </subcellularLocation>
</comment>
<comment type="similarity">
    <text evidence="3">Belongs to the peptidase S49 family.</text>
</comment>
<gene>
    <name type="primary">sohB</name>
    <name type="ordered locus">BUsg_272</name>
</gene>
<dbReference type="EC" id="3.4.21.-"/>
<dbReference type="EMBL" id="AE013218">
    <property type="protein sequence ID" value="AAM67830.1"/>
    <property type="molecule type" value="Genomic_DNA"/>
</dbReference>
<dbReference type="RefSeq" id="WP_011053797.1">
    <property type="nucleotide sequence ID" value="NC_004061.1"/>
</dbReference>
<dbReference type="SMR" id="Q8K9P8"/>
<dbReference type="STRING" id="198804.BUsg_272"/>
<dbReference type="GeneID" id="93003742"/>
<dbReference type="KEGG" id="bas:BUsg_272"/>
<dbReference type="eggNOG" id="COG0616">
    <property type="taxonomic scope" value="Bacteria"/>
</dbReference>
<dbReference type="HOGENOM" id="CLU_070316_0_0_6"/>
<dbReference type="Proteomes" id="UP000000416">
    <property type="component" value="Chromosome"/>
</dbReference>
<dbReference type="GO" id="GO:0005886">
    <property type="term" value="C:plasma membrane"/>
    <property type="evidence" value="ECO:0007669"/>
    <property type="project" value="UniProtKB-SubCell"/>
</dbReference>
<dbReference type="GO" id="GO:0004252">
    <property type="term" value="F:serine-type endopeptidase activity"/>
    <property type="evidence" value="ECO:0007669"/>
    <property type="project" value="InterPro"/>
</dbReference>
<dbReference type="GO" id="GO:0006508">
    <property type="term" value="P:proteolysis"/>
    <property type="evidence" value="ECO:0007669"/>
    <property type="project" value="UniProtKB-KW"/>
</dbReference>
<dbReference type="CDD" id="cd07023">
    <property type="entry name" value="S49_Sppa_N_C"/>
    <property type="match status" value="1"/>
</dbReference>
<dbReference type="Gene3D" id="6.20.330.10">
    <property type="match status" value="1"/>
</dbReference>
<dbReference type="Gene3D" id="3.90.226.10">
    <property type="entry name" value="2-enoyl-CoA Hydratase, Chain A, domain 1"/>
    <property type="match status" value="1"/>
</dbReference>
<dbReference type="InterPro" id="IPR029045">
    <property type="entry name" value="ClpP/crotonase-like_dom_sf"/>
</dbReference>
<dbReference type="InterPro" id="IPR002142">
    <property type="entry name" value="Peptidase_S49"/>
</dbReference>
<dbReference type="InterPro" id="IPR013703">
    <property type="entry name" value="Peptidase_S49_N_proteobac"/>
</dbReference>
<dbReference type="InterPro" id="IPR047272">
    <property type="entry name" value="S49_SppA_C"/>
</dbReference>
<dbReference type="NCBIfam" id="NF008745">
    <property type="entry name" value="PRK11778.1"/>
    <property type="match status" value="1"/>
</dbReference>
<dbReference type="PANTHER" id="PTHR42987">
    <property type="entry name" value="PEPTIDASE S49"/>
    <property type="match status" value="1"/>
</dbReference>
<dbReference type="PANTHER" id="PTHR42987:SF4">
    <property type="entry name" value="PROTEASE SOHB-RELATED"/>
    <property type="match status" value="1"/>
</dbReference>
<dbReference type="Pfam" id="PF01343">
    <property type="entry name" value="Peptidase_S49"/>
    <property type="match status" value="1"/>
</dbReference>
<dbReference type="Pfam" id="PF08496">
    <property type="entry name" value="Peptidase_S49_N"/>
    <property type="match status" value="1"/>
</dbReference>
<dbReference type="SUPFAM" id="SSF52096">
    <property type="entry name" value="ClpP/crotonase"/>
    <property type="match status" value="1"/>
</dbReference>
<protein>
    <recommendedName>
        <fullName>Probable protease SohB</fullName>
        <ecNumber>3.4.21.-</ecNumber>
    </recommendedName>
</protein>
<name>SOHB_BUCAP</name>
<reference key="1">
    <citation type="journal article" date="2002" name="Science">
        <title>50 million years of genomic stasis in endosymbiotic bacteria.</title>
        <authorList>
            <person name="Tamas I."/>
            <person name="Klasson L."/>
            <person name="Canbaeck B."/>
            <person name="Naeslund A.K."/>
            <person name="Eriksson A.-S."/>
            <person name="Wernegreen J.J."/>
            <person name="Sandstroem J.P."/>
            <person name="Moran N.A."/>
            <person name="Andersson S.G.E."/>
        </authorList>
    </citation>
    <scope>NUCLEOTIDE SEQUENCE [LARGE SCALE GENOMIC DNA]</scope>
    <source>
        <strain>Sg</strain>
    </source>
</reference>
<organism>
    <name type="scientific">Buchnera aphidicola subsp. Schizaphis graminum (strain Sg)</name>
    <dbReference type="NCBI Taxonomy" id="198804"/>
    <lineage>
        <taxon>Bacteria</taxon>
        <taxon>Pseudomonadati</taxon>
        <taxon>Pseudomonadota</taxon>
        <taxon>Gammaproteobacteria</taxon>
        <taxon>Enterobacterales</taxon>
        <taxon>Erwiniaceae</taxon>
        <taxon>Buchnera</taxon>
    </lineage>
</organism>
<sequence>MNLLLNYELFLAKAITFLFIIFITPFIFNIIKRKRTDQKKFKIILLEEKYKNIKKDILLSKMNKLEKKKWIKEEKKKDKEFEKKNKNNIVTLKKKTLFVLDFKGGIHAHEVIGLREEISAILLAANKDDEVLLRLESSGGVIHGYGLAAAQLERLRQNKIRLIISIDKIAASGGYMMACVADYIISAPFAIIGSIGVVGQLPNFNKLLKKCNIDVELHTAGDYKRTLTMFGQNTELTRKKFCQELNLTHEIFKKFIKKMRPCLDIENISNGEHWFGTIAFKKNLVDEINTSDNILMSKMKEKYTLLNIQYIYKNKKLENFTSFIIENIKIIIIKIFSYKKIL</sequence>
<accession>Q8K9P8</accession>
<proteinExistence type="inferred from homology"/>
<evidence type="ECO:0000250" key="1"/>
<evidence type="ECO:0000255" key="2"/>
<evidence type="ECO:0000305" key="3"/>
<keyword id="KW-1003">Cell membrane</keyword>
<keyword id="KW-0378">Hydrolase</keyword>
<keyword id="KW-0472">Membrane</keyword>
<keyword id="KW-0645">Protease</keyword>
<keyword id="KW-0720">Serine protease</keyword>
<keyword id="KW-0812">Transmembrane</keyword>
<keyword id="KW-1133">Transmembrane helix</keyword>